<dbReference type="EMBL" id="BA000040">
    <property type="protein sequence ID" value="BAC50640.1"/>
    <property type="molecule type" value="Genomic_DNA"/>
</dbReference>
<dbReference type="RefSeq" id="NP_772015.1">
    <property type="nucleotide sequence ID" value="NC_004463.1"/>
</dbReference>
<dbReference type="RefSeq" id="WP_011088131.1">
    <property type="nucleotide sequence ID" value="NZ_CP011360.1"/>
</dbReference>
<dbReference type="SMR" id="Q89JA8"/>
<dbReference type="FunCoup" id="Q89JA8">
    <property type="interactions" value="828"/>
</dbReference>
<dbReference type="STRING" id="224911.AAV28_24285"/>
<dbReference type="EnsemblBacteria" id="BAC50640">
    <property type="protein sequence ID" value="BAC50640"/>
    <property type="gene ID" value="BAC50640"/>
</dbReference>
<dbReference type="GeneID" id="46492373"/>
<dbReference type="KEGG" id="bja:bll5375"/>
<dbReference type="PATRIC" id="fig|224911.44.peg.5274"/>
<dbReference type="eggNOG" id="COG0203">
    <property type="taxonomic scope" value="Bacteria"/>
</dbReference>
<dbReference type="HOGENOM" id="CLU_074407_2_0_5"/>
<dbReference type="InParanoid" id="Q89JA8"/>
<dbReference type="OrthoDB" id="9809073at2"/>
<dbReference type="PhylomeDB" id="Q89JA8"/>
<dbReference type="Proteomes" id="UP000002526">
    <property type="component" value="Chromosome"/>
</dbReference>
<dbReference type="GO" id="GO:0022625">
    <property type="term" value="C:cytosolic large ribosomal subunit"/>
    <property type="evidence" value="ECO:0000318"/>
    <property type="project" value="GO_Central"/>
</dbReference>
<dbReference type="GO" id="GO:0003735">
    <property type="term" value="F:structural constituent of ribosome"/>
    <property type="evidence" value="ECO:0000318"/>
    <property type="project" value="GO_Central"/>
</dbReference>
<dbReference type="GO" id="GO:0006412">
    <property type="term" value="P:translation"/>
    <property type="evidence" value="ECO:0007669"/>
    <property type="project" value="UniProtKB-UniRule"/>
</dbReference>
<dbReference type="FunFam" id="3.90.1030.10:FF:000001">
    <property type="entry name" value="50S ribosomal protein L17"/>
    <property type="match status" value="1"/>
</dbReference>
<dbReference type="Gene3D" id="3.90.1030.10">
    <property type="entry name" value="Ribosomal protein L17"/>
    <property type="match status" value="1"/>
</dbReference>
<dbReference type="HAMAP" id="MF_01368">
    <property type="entry name" value="Ribosomal_bL17"/>
    <property type="match status" value="1"/>
</dbReference>
<dbReference type="InterPro" id="IPR000456">
    <property type="entry name" value="Ribosomal_bL17"/>
</dbReference>
<dbReference type="InterPro" id="IPR047859">
    <property type="entry name" value="Ribosomal_bL17_CS"/>
</dbReference>
<dbReference type="InterPro" id="IPR036373">
    <property type="entry name" value="Ribosomal_bL17_sf"/>
</dbReference>
<dbReference type="NCBIfam" id="TIGR00059">
    <property type="entry name" value="L17"/>
    <property type="match status" value="1"/>
</dbReference>
<dbReference type="PANTHER" id="PTHR14413:SF16">
    <property type="entry name" value="LARGE RIBOSOMAL SUBUNIT PROTEIN BL17M"/>
    <property type="match status" value="1"/>
</dbReference>
<dbReference type="PANTHER" id="PTHR14413">
    <property type="entry name" value="RIBOSOMAL PROTEIN L17"/>
    <property type="match status" value="1"/>
</dbReference>
<dbReference type="Pfam" id="PF01196">
    <property type="entry name" value="Ribosomal_L17"/>
    <property type="match status" value="1"/>
</dbReference>
<dbReference type="SUPFAM" id="SSF64263">
    <property type="entry name" value="Prokaryotic ribosomal protein L17"/>
    <property type="match status" value="1"/>
</dbReference>
<dbReference type="PROSITE" id="PS01167">
    <property type="entry name" value="RIBOSOMAL_L17"/>
    <property type="match status" value="1"/>
</dbReference>
<sequence length="138" mass="15574">MRHGKVHRKLNRTAEHRRAMFANMAAALIKHEQIVTTLPKAKELRPIVEKLVTLGKKGGLAMRRQAISEMRDKDQVKKLFDVLATRYKDRQGGYTRIIKAGFRYGDNAAMAVIEFVDRDVDAKGQDSGPVQEKEAEAA</sequence>
<name>RL17_BRADU</name>
<protein>
    <recommendedName>
        <fullName evidence="1">Large ribosomal subunit protein bL17</fullName>
    </recommendedName>
    <alternativeName>
        <fullName evidence="2">50S ribosomal protein L17</fullName>
    </alternativeName>
</protein>
<keyword id="KW-1185">Reference proteome</keyword>
<keyword id="KW-0687">Ribonucleoprotein</keyword>
<keyword id="KW-0689">Ribosomal protein</keyword>
<accession>Q89JA8</accession>
<reference key="1">
    <citation type="journal article" date="2002" name="DNA Res.">
        <title>Complete genomic sequence of nitrogen-fixing symbiotic bacterium Bradyrhizobium japonicum USDA110.</title>
        <authorList>
            <person name="Kaneko T."/>
            <person name="Nakamura Y."/>
            <person name="Sato S."/>
            <person name="Minamisawa K."/>
            <person name="Uchiumi T."/>
            <person name="Sasamoto S."/>
            <person name="Watanabe A."/>
            <person name="Idesawa K."/>
            <person name="Iriguchi M."/>
            <person name="Kawashima K."/>
            <person name="Kohara M."/>
            <person name="Matsumoto M."/>
            <person name="Shimpo S."/>
            <person name="Tsuruoka H."/>
            <person name="Wada T."/>
            <person name="Yamada M."/>
            <person name="Tabata S."/>
        </authorList>
    </citation>
    <scope>NUCLEOTIDE SEQUENCE [LARGE SCALE GENOMIC DNA]</scope>
    <source>
        <strain>JCM 10833 / BCRC 13528 / IAM 13628 / NBRC 14792 / USDA 110</strain>
    </source>
</reference>
<comment type="subunit">
    <text evidence="1">Part of the 50S ribosomal subunit. Contacts protein L32.</text>
</comment>
<comment type="similarity">
    <text evidence="1">Belongs to the bacterial ribosomal protein bL17 family.</text>
</comment>
<organism>
    <name type="scientific">Bradyrhizobium diazoefficiens (strain JCM 10833 / BCRC 13528 / IAM 13628 / NBRC 14792 / USDA 110)</name>
    <dbReference type="NCBI Taxonomy" id="224911"/>
    <lineage>
        <taxon>Bacteria</taxon>
        <taxon>Pseudomonadati</taxon>
        <taxon>Pseudomonadota</taxon>
        <taxon>Alphaproteobacteria</taxon>
        <taxon>Hyphomicrobiales</taxon>
        <taxon>Nitrobacteraceae</taxon>
        <taxon>Bradyrhizobium</taxon>
    </lineage>
</organism>
<proteinExistence type="inferred from homology"/>
<gene>
    <name evidence="1" type="primary">rplQ</name>
    <name type="ordered locus">bll5375</name>
</gene>
<evidence type="ECO:0000255" key="1">
    <source>
        <dbReference type="HAMAP-Rule" id="MF_01368"/>
    </source>
</evidence>
<evidence type="ECO:0000305" key="2"/>
<feature type="chain" id="PRO_0000267838" description="Large ribosomal subunit protein bL17">
    <location>
        <begin position="1"/>
        <end position="138"/>
    </location>
</feature>